<reference key="1">
    <citation type="submission" date="1999-07" db="EMBL/GenBank/DDBJ databases">
        <title>Rhizobium meliloti carries two sets of nuo genes.</title>
        <authorList>
            <person name="Putnoky P."/>
            <person name="Jady B."/>
            <person name="Chellapilla K.P."/>
            <person name="Barta F."/>
            <person name="Kiss E."/>
        </authorList>
    </citation>
    <scope>NUCLEOTIDE SEQUENCE [GENOMIC DNA]</scope>
    <source>
        <strain>41</strain>
    </source>
</reference>
<reference key="2">
    <citation type="journal article" date="2001" name="Proc. Natl. Acad. Sci. U.S.A.">
        <title>Nucleotide sequence and predicted functions of the entire Sinorhizobium meliloti pSymA megaplasmid.</title>
        <authorList>
            <person name="Barnett M.J."/>
            <person name="Fisher R.F."/>
            <person name="Jones T."/>
            <person name="Komp C."/>
            <person name="Abola A.P."/>
            <person name="Barloy-Hubler F."/>
            <person name="Bowser L."/>
            <person name="Capela D."/>
            <person name="Galibert F."/>
            <person name="Gouzy J."/>
            <person name="Gurjal M."/>
            <person name="Hong A."/>
            <person name="Huizar L."/>
            <person name="Hyman R.W."/>
            <person name="Kahn D."/>
            <person name="Kahn M.L."/>
            <person name="Kalman S."/>
            <person name="Keating D.H."/>
            <person name="Palm C."/>
            <person name="Peck M.C."/>
            <person name="Surzycki R."/>
            <person name="Wells D.H."/>
            <person name="Yeh K.-C."/>
            <person name="Davis R.W."/>
            <person name="Federspiel N.A."/>
            <person name="Long S.R."/>
        </authorList>
    </citation>
    <scope>NUCLEOTIDE SEQUENCE [LARGE SCALE GENOMIC DNA]</scope>
    <source>
        <strain>1021</strain>
    </source>
</reference>
<reference key="3">
    <citation type="journal article" date="2001" name="Science">
        <title>The composite genome of the legume symbiont Sinorhizobium meliloti.</title>
        <authorList>
            <person name="Galibert F."/>
            <person name="Finan T.M."/>
            <person name="Long S.R."/>
            <person name="Puehler A."/>
            <person name="Abola P."/>
            <person name="Ampe F."/>
            <person name="Barloy-Hubler F."/>
            <person name="Barnett M.J."/>
            <person name="Becker A."/>
            <person name="Boistard P."/>
            <person name="Bothe G."/>
            <person name="Boutry M."/>
            <person name="Bowser L."/>
            <person name="Buhrmester J."/>
            <person name="Cadieu E."/>
            <person name="Capela D."/>
            <person name="Chain P."/>
            <person name="Cowie A."/>
            <person name="Davis R.W."/>
            <person name="Dreano S."/>
            <person name="Federspiel N.A."/>
            <person name="Fisher R.F."/>
            <person name="Gloux S."/>
            <person name="Godrie T."/>
            <person name="Goffeau A."/>
            <person name="Golding B."/>
            <person name="Gouzy J."/>
            <person name="Gurjal M."/>
            <person name="Hernandez-Lucas I."/>
            <person name="Hong A."/>
            <person name="Huizar L."/>
            <person name="Hyman R.W."/>
            <person name="Jones T."/>
            <person name="Kahn D."/>
            <person name="Kahn M.L."/>
            <person name="Kalman S."/>
            <person name="Keating D.H."/>
            <person name="Kiss E."/>
            <person name="Komp C."/>
            <person name="Lelaure V."/>
            <person name="Masuy D."/>
            <person name="Palm C."/>
            <person name="Peck M.C."/>
            <person name="Pohl T.M."/>
            <person name="Portetelle D."/>
            <person name="Purnelle B."/>
            <person name="Ramsperger U."/>
            <person name="Surzycki R."/>
            <person name="Thebault P."/>
            <person name="Vandenbol M."/>
            <person name="Vorhoelter F.J."/>
            <person name="Weidner S."/>
            <person name="Wells D.H."/>
            <person name="Wong K."/>
            <person name="Yeh K.-C."/>
            <person name="Batut J."/>
        </authorList>
    </citation>
    <scope>NUCLEOTIDE SEQUENCE [LARGE SCALE GENOMIC DNA]</scope>
    <source>
        <strain>1021</strain>
    </source>
</reference>
<organism>
    <name type="scientific">Rhizobium meliloti (strain 1021)</name>
    <name type="common">Ensifer meliloti</name>
    <name type="synonym">Sinorhizobium meliloti</name>
    <dbReference type="NCBI Taxonomy" id="266834"/>
    <lineage>
        <taxon>Bacteria</taxon>
        <taxon>Pseudomonadati</taxon>
        <taxon>Pseudomonadota</taxon>
        <taxon>Alphaproteobacteria</taxon>
        <taxon>Hyphomicrobiales</taxon>
        <taxon>Rhizobiaceae</taxon>
        <taxon>Sinorhizobium/Ensifer group</taxon>
        <taxon>Sinorhizobium</taxon>
    </lineage>
</organism>
<sequence>MAGVNDAIRDSVLFTTADSIISWSRRSALWPETFGIACCAIEMISAGCARYDLDRFGVVFRPSPRQSDVMIIAGTVTRKFAPVVRRLYDQMPEPRWVIAMGTCAISGGVYNTYAVVQGSETFVPVDVHVPGCPPRPEALMHGFLLLQEKIKKSRALTGTPLGRVIAS</sequence>
<protein>
    <recommendedName>
        <fullName evidence="1">NADH-quinone oxidoreductase subunit B 2</fullName>
        <ecNumber evidence="1">7.1.1.-</ecNumber>
    </recommendedName>
    <alternativeName>
        <fullName evidence="1">NADH dehydrogenase I subunit B 2</fullName>
    </alternativeName>
    <alternativeName>
        <fullName evidence="1">NDH-1 subunit B 2</fullName>
    </alternativeName>
</protein>
<name>NUOB2_RHIME</name>
<gene>
    <name evidence="1" type="primary">nuoB2</name>
    <name type="ordered locus">RA0833</name>
    <name type="ORF">SMa1532</name>
</gene>
<proteinExistence type="inferred from homology"/>
<feature type="chain" id="PRO_0000118776" description="NADH-quinone oxidoreductase subunit B 2">
    <location>
        <begin position="1"/>
        <end position="167"/>
    </location>
</feature>
<feature type="binding site" evidence="1">
    <location>
        <position position="38"/>
    </location>
    <ligand>
        <name>[4Fe-4S] cluster</name>
        <dbReference type="ChEBI" id="CHEBI:49883"/>
    </ligand>
</feature>
<feature type="binding site" evidence="1">
    <location>
        <position position="39"/>
    </location>
    <ligand>
        <name>[4Fe-4S] cluster</name>
        <dbReference type="ChEBI" id="CHEBI:49883"/>
    </ligand>
</feature>
<feature type="binding site" evidence="1">
    <location>
        <position position="103"/>
    </location>
    <ligand>
        <name>[4Fe-4S] cluster</name>
        <dbReference type="ChEBI" id="CHEBI:49883"/>
    </ligand>
</feature>
<feature type="binding site" evidence="1">
    <location>
        <position position="132"/>
    </location>
    <ligand>
        <name>[4Fe-4S] cluster</name>
        <dbReference type="ChEBI" id="CHEBI:49883"/>
    </ligand>
</feature>
<feature type="sequence conflict" description="In Ref. 1; CAB51630." evidence="2" ref="1">
    <original>S</original>
    <variation>L</variation>
    <location>
        <position position="167"/>
    </location>
</feature>
<accession>P56897</accession>
<comment type="function">
    <text evidence="1">NDH-1 shuttles electrons from NADH, via FMN and iron-sulfur (Fe-S) centers, to quinones in the respiratory chain. The immediate electron acceptor for the enzyme in this species is believed to be ubiquinone. Couples the redox reaction to proton translocation (for every two electrons transferred, four hydrogen ions are translocated across the cytoplasmic membrane), and thus conserves the redox energy in a proton gradient.</text>
</comment>
<comment type="catalytic activity">
    <reaction evidence="1">
        <text>a quinone + NADH + 5 H(+)(in) = a quinol + NAD(+) + 4 H(+)(out)</text>
        <dbReference type="Rhea" id="RHEA:57888"/>
        <dbReference type="ChEBI" id="CHEBI:15378"/>
        <dbReference type="ChEBI" id="CHEBI:24646"/>
        <dbReference type="ChEBI" id="CHEBI:57540"/>
        <dbReference type="ChEBI" id="CHEBI:57945"/>
        <dbReference type="ChEBI" id="CHEBI:132124"/>
    </reaction>
</comment>
<comment type="cofactor">
    <cofactor evidence="1">
        <name>[4Fe-4S] cluster</name>
        <dbReference type="ChEBI" id="CHEBI:49883"/>
    </cofactor>
    <text evidence="1">Binds 1 [4Fe-4S] cluster.</text>
</comment>
<comment type="subunit">
    <text evidence="1">NDH-1 is composed of 14 different subunits. Subunits NuoB, C, D, E, F, and G constitute the peripheral sector of the complex.</text>
</comment>
<comment type="subcellular location">
    <subcellularLocation>
        <location evidence="1">Cell inner membrane</location>
        <topology evidence="1">Peripheral membrane protein</topology>
        <orientation evidence="1">Cytoplasmic side</orientation>
    </subcellularLocation>
</comment>
<comment type="similarity">
    <text evidence="1">Belongs to the complex I 20 kDa subunit family.</text>
</comment>
<evidence type="ECO:0000255" key="1">
    <source>
        <dbReference type="HAMAP-Rule" id="MF_01356"/>
    </source>
</evidence>
<evidence type="ECO:0000305" key="2"/>
<dbReference type="EC" id="7.1.1.-" evidence="1"/>
<dbReference type="EMBL" id="AJ245399">
    <property type="protein sequence ID" value="CAB51630.1"/>
    <property type="molecule type" value="Genomic_DNA"/>
</dbReference>
<dbReference type="EMBL" id="AE006469">
    <property type="protein sequence ID" value="AAK65491.1"/>
    <property type="molecule type" value="Genomic_DNA"/>
</dbReference>
<dbReference type="PIR" id="A95366">
    <property type="entry name" value="A95366"/>
</dbReference>
<dbReference type="RefSeq" id="NP_436079.1">
    <property type="nucleotide sequence ID" value="NC_003037.1"/>
</dbReference>
<dbReference type="RefSeq" id="WP_010967801.1">
    <property type="nucleotide sequence ID" value="NC_003037.1"/>
</dbReference>
<dbReference type="SMR" id="P56897"/>
<dbReference type="EnsemblBacteria" id="AAK65491">
    <property type="protein sequence ID" value="AAK65491"/>
    <property type="gene ID" value="SMa1532"/>
</dbReference>
<dbReference type="KEGG" id="sme:SMa1532"/>
<dbReference type="PATRIC" id="fig|266834.11.peg.864"/>
<dbReference type="HOGENOM" id="CLU_055737_7_3_5"/>
<dbReference type="OrthoDB" id="9786737at2"/>
<dbReference type="PRO" id="PR:P56897"/>
<dbReference type="Proteomes" id="UP000001976">
    <property type="component" value="Plasmid pSymA"/>
</dbReference>
<dbReference type="GO" id="GO:0005886">
    <property type="term" value="C:plasma membrane"/>
    <property type="evidence" value="ECO:0007669"/>
    <property type="project" value="UniProtKB-SubCell"/>
</dbReference>
<dbReference type="GO" id="GO:0045271">
    <property type="term" value="C:respiratory chain complex I"/>
    <property type="evidence" value="ECO:0007669"/>
    <property type="project" value="TreeGrafter"/>
</dbReference>
<dbReference type="GO" id="GO:0051539">
    <property type="term" value="F:4 iron, 4 sulfur cluster binding"/>
    <property type="evidence" value="ECO:0007669"/>
    <property type="project" value="UniProtKB-KW"/>
</dbReference>
<dbReference type="GO" id="GO:0005506">
    <property type="term" value="F:iron ion binding"/>
    <property type="evidence" value="ECO:0007669"/>
    <property type="project" value="UniProtKB-UniRule"/>
</dbReference>
<dbReference type="GO" id="GO:0008137">
    <property type="term" value="F:NADH dehydrogenase (ubiquinone) activity"/>
    <property type="evidence" value="ECO:0007669"/>
    <property type="project" value="InterPro"/>
</dbReference>
<dbReference type="GO" id="GO:0050136">
    <property type="term" value="F:NADH:ubiquinone reductase (non-electrogenic) activity"/>
    <property type="evidence" value="ECO:0007669"/>
    <property type="project" value="UniProtKB-UniRule"/>
</dbReference>
<dbReference type="GO" id="GO:0048038">
    <property type="term" value="F:quinone binding"/>
    <property type="evidence" value="ECO:0007669"/>
    <property type="project" value="UniProtKB-KW"/>
</dbReference>
<dbReference type="GO" id="GO:0009060">
    <property type="term" value="P:aerobic respiration"/>
    <property type="evidence" value="ECO:0007669"/>
    <property type="project" value="TreeGrafter"/>
</dbReference>
<dbReference type="GO" id="GO:0015990">
    <property type="term" value="P:electron transport coupled proton transport"/>
    <property type="evidence" value="ECO:0007669"/>
    <property type="project" value="TreeGrafter"/>
</dbReference>
<dbReference type="FunFam" id="3.40.50.12280:FF:000002">
    <property type="entry name" value="NADH-quinone oxidoreductase subunit B"/>
    <property type="match status" value="1"/>
</dbReference>
<dbReference type="Gene3D" id="3.40.50.12280">
    <property type="match status" value="1"/>
</dbReference>
<dbReference type="HAMAP" id="MF_01356">
    <property type="entry name" value="NDH1_NuoB"/>
    <property type="match status" value="1"/>
</dbReference>
<dbReference type="InterPro" id="IPR006137">
    <property type="entry name" value="NADH_UbQ_OxRdtase-like_20kDa"/>
</dbReference>
<dbReference type="InterPro" id="IPR006138">
    <property type="entry name" value="NADH_UQ_OxRdtase_20Kd_su"/>
</dbReference>
<dbReference type="NCBIfam" id="TIGR01957">
    <property type="entry name" value="nuoB_fam"/>
    <property type="match status" value="1"/>
</dbReference>
<dbReference type="NCBIfam" id="NF005012">
    <property type="entry name" value="PRK06411.1"/>
    <property type="match status" value="1"/>
</dbReference>
<dbReference type="PANTHER" id="PTHR11995">
    <property type="entry name" value="NADH DEHYDROGENASE"/>
    <property type="match status" value="1"/>
</dbReference>
<dbReference type="PANTHER" id="PTHR11995:SF14">
    <property type="entry name" value="NADH DEHYDROGENASE [UBIQUINONE] IRON-SULFUR PROTEIN 7, MITOCHONDRIAL"/>
    <property type="match status" value="1"/>
</dbReference>
<dbReference type="Pfam" id="PF01058">
    <property type="entry name" value="Oxidored_q6"/>
    <property type="match status" value="1"/>
</dbReference>
<dbReference type="SUPFAM" id="SSF56770">
    <property type="entry name" value="HydA/Nqo6-like"/>
    <property type="match status" value="1"/>
</dbReference>
<keyword id="KW-0004">4Fe-4S</keyword>
<keyword id="KW-0997">Cell inner membrane</keyword>
<keyword id="KW-1003">Cell membrane</keyword>
<keyword id="KW-0408">Iron</keyword>
<keyword id="KW-0411">Iron-sulfur</keyword>
<keyword id="KW-0472">Membrane</keyword>
<keyword id="KW-0479">Metal-binding</keyword>
<keyword id="KW-0520">NAD</keyword>
<keyword id="KW-0614">Plasmid</keyword>
<keyword id="KW-0874">Quinone</keyword>
<keyword id="KW-1185">Reference proteome</keyword>
<keyword id="KW-1278">Translocase</keyword>
<keyword id="KW-0813">Transport</keyword>
<keyword id="KW-0830">Ubiquinone</keyword>
<geneLocation type="plasmid">
    <name>pSymA</name>
    <name>megaplasmid 1</name>
</geneLocation>